<gene>
    <name type="primary">DPH2</name>
</gene>
<dbReference type="EMBL" id="DQ981502">
    <property type="protein sequence ID" value="ABI97860.1"/>
    <property type="molecule type" value="mRNA"/>
</dbReference>
<dbReference type="RefSeq" id="NP_001233722.1">
    <property type="nucleotide sequence ID" value="NM_001246793.1"/>
</dbReference>
<dbReference type="SMR" id="Q002B5"/>
<dbReference type="PaxDb" id="10029-NP_001233722.1"/>
<dbReference type="Ensembl" id="ENSCGRT00001002960.1">
    <property type="protein sequence ID" value="ENSCGRP00001002285.1"/>
    <property type="gene ID" value="ENSCGRG00001002429.1"/>
</dbReference>
<dbReference type="GeneID" id="100689365"/>
<dbReference type="KEGG" id="cge:100689365"/>
<dbReference type="CTD" id="1802"/>
<dbReference type="eggNOG" id="KOG2648">
    <property type="taxonomic scope" value="Eukaryota"/>
</dbReference>
<dbReference type="GeneTree" id="ENSGT00940000153694"/>
<dbReference type="OMA" id="QIWNENH"/>
<dbReference type="OrthoDB" id="449241at2759"/>
<dbReference type="UniPathway" id="UPA00559"/>
<dbReference type="Proteomes" id="UP000694386">
    <property type="component" value="Unplaced"/>
</dbReference>
<dbReference type="Proteomes" id="UP001108280">
    <property type="component" value="Chromosome 2"/>
</dbReference>
<dbReference type="GO" id="GO:0120513">
    <property type="term" value="C:2-(3-amino-3-carboxypropyl)histidine synthase complex"/>
    <property type="evidence" value="ECO:0000250"/>
    <property type="project" value="UniProtKB"/>
</dbReference>
<dbReference type="GO" id="GO:0090560">
    <property type="term" value="F:2-(3-amino-3-carboxypropyl)histidine synthase activity"/>
    <property type="evidence" value="ECO:0007669"/>
    <property type="project" value="UniProtKB-EC"/>
</dbReference>
<dbReference type="GO" id="GO:0051539">
    <property type="term" value="F:4 iron, 4 sulfur cluster binding"/>
    <property type="evidence" value="ECO:0000250"/>
    <property type="project" value="UniProtKB"/>
</dbReference>
<dbReference type="GO" id="GO:0046872">
    <property type="term" value="F:metal ion binding"/>
    <property type="evidence" value="ECO:0007669"/>
    <property type="project" value="UniProtKB-KW"/>
</dbReference>
<dbReference type="GO" id="GO:0017183">
    <property type="term" value="P:protein histidyl modification to diphthamide"/>
    <property type="evidence" value="ECO:0000250"/>
    <property type="project" value="UniProtKB"/>
</dbReference>
<dbReference type="FunFam" id="3.40.50.11840:FF:000002">
    <property type="entry name" value="2-(3-amino-3-carboxypropyl)histidine synthase subunit 2"/>
    <property type="match status" value="1"/>
</dbReference>
<dbReference type="FunFam" id="3.40.50.11860:FF:000001">
    <property type="entry name" value="2-(3-amino-3-carboxypropyl)histidine synthase subunit 2"/>
    <property type="match status" value="1"/>
</dbReference>
<dbReference type="Gene3D" id="3.40.50.11840">
    <property type="entry name" value="Diphthamide synthesis DPH1/DPH2 domain 1"/>
    <property type="match status" value="1"/>
</dbReference>
<dbReference type="Gene3D" id="3.40.50.11860">
    <property type="entry name" value="Diphthamide synthesis DPH1/DPH2 domain 3"/>
    <property type="match status" value="1"/>
</dbReference>
<dbReference type="InterPro" id="IPR010014">
    <property type="entry name" value="DHP2"/>
</dbReference>
<dbReference type="InterPro" id="IPR016435">
    <property type="entry name" value="DPH1/DPH2"/>
</dbReference>
<dbReference type="InterPro" id="IPR042263">
    <property type="entry name" value="DPH1/DPH2_1"/>
</dbReference>
<dbReference type="InterPro" id="IPR042265">
    <property type="entry name" value="DPH1/DPH2_3"/>
</dbReference>
<dbReference type="NCBIfam" id="TIGR00322">
    <property type="entry name" value="diphth2_R"/>
    <property type="match status" value="1"/>
</dbReference>
<dbReference type="NCBIfam" id="TIGR00272">
    <property type="entry name" value="DPH2"/>
    <property type="match status" value="1"/>
</dbReference>
<dbReference type="PANTHER" id="PTHR10762:SF2">
    <property type="entry name" value="2-(3-AMINO-3-CARBOXYPROPYL)HISTIDINE SYNTHASE SUBUNIT 2"/>
    <property type="match status" value="1"/>
</dbReference>
<dbReference type="PANTHER" id="PTHR10762">
    <property type="entry name" value="DIPHTHAMIDE BIOSYNTHESIS PROTEIN"/>
    <property type="match status" value="1"/>
</dbReference>
<dbReference type="Pfam" id="PF01866">
    <property type="entry name" value="Diphthamide_syn"/>
    <property type="match status" value="1"/>
</dbReference>
<dbReference type="SFLD" id="SFLDG01121">
    <property type="entry name" value="Diphthamide_biosynthesis"/>
    <property type="match status" value="1"/>
</dbReference>
<dbReference type="SFLD" id="SFLDF00408">
    <property type="entry name" value="Diphthamide_biosynthesis_famil"/>
    <property type="match status" value="1"/>
</dbReference>
<dbReference type="SFLD" id="SFLDS00032">
    <property type="entry name" value="Radical_SAM_3-amino-3-carboxyp"/>
    <property type="match status" value="1"/>
</dbReference>
<accession>Q002B5</accession>
<sequence length="489" mass="52072">MESTFSSPAEAALQREAGVPGLFTPPEDLDRVYELERVTKFVCDLGCQRVALQFPDQLLGDAGAVAVRLEEVTGSKMFILGDTAYGSCCVDVLGAEQAGAEALVHFGPACLSPPASLLPITFVLGQRSVALELCAKAFEARNPDPTAPVVLLSEPACAHALEALATLLRPKYQDLLISSPALPLPVGSPSSQPEPLERFGRRFPLSPGRCLEEYGAFYVGGSQASSDPVLDPDLSRLLLGWTPGRPFISCCPDTGQTQDQGVQAGRLRARRLYLIERARDAHVVGLLAGTLGVAQHREALAHLRKLTEAAGKRSYVLALGRPTPAKLANFPEMDIFVLLACPLGALAPQPSGGFFRPILTPCELEAACNPAWPPPGLAPHLTHYAELLPGSPFYVPLPPPESELWDTPDVSLISGDLRPPPSWKSSSDTGCSALTPRPQLELAESSPAASFLSSRSWQGLEPRLGQTPVKEAVQGRRGIAIAYEDEGSG</sequence>
<evidence type="ECO:0000250" key="1">
    <source>
        <dbReference type="UniProtKB" id="P32461"/>
    </source>
</evidence>
<evidence type="ECO:0000250" key="2">
    <source>
        <dbReference type="UniProtKB" id="Q9BQC3"/>
    </source>
</evidence>
<evidence type="ECO:0000269" key="3">
    <source>
    </source>
</evidence>
<evidence type="ECO:0000305" key="4"/>
<name>DPH2_CRIGR</name>
<feature type="chain" id="PRO_0000307888" description="2-(3-amino-3-carboxypropyl)histidine synthase subunit 2">
    <location>
        <begin position="1"/>
        <end position="489"/>
    </location>
</feature>
<feature type="region of interest" description="Required for function" evidence="3">
    <location>
        <begin position="398"/>
        <end position="489"/>
    </location>
</feature>
<feature type="binding site" evidence="1">
    <location>
        <position position="89"/>
    </location>
    <ligand>
        <name>[4Fe-4S] cluster</name>
        <dbReference type="ChEBI" id="CHEBI:49883"/>
    </ligand>
</feature>
<feature type="binding site" evidence="1">
    <location>
        <position position="110"/>
    </location>
    <ligand>
        <name>[4Fe-4S] cluster</name>
        <dbReference type="ChEBI" id="CHEBI:49883"/>
    </ligand>
</feature>
<feature type="binding site" evidence="1">
    <location>
        <position position="341"/>
    </location>
    <ligand>
        <name>[4Fe-4S] cluster</name>
        <dbReference type="ChEBI" id="CHEBI:49883"/>
    </ligand>
</feature>
<feature type="modified residue" description="N-acetylmethionine" evidence="2">
    <location>
        <position position="1"/>
    </location>
</feature>
<feature type="modified residue" description="Phosphoserine" evidence="2">
    <location>
        <position position="7"/>
    </location>
</feature>
<feature type="modified residue" description="Phosphothreonine" evidence="2">
    <location>
        <position position="435"/>
    </location>
</feature>
<feature type="modified residue" description="Phosphoserine" evidence="2">
    <location>
        <position position="446"/>
    </location>
</feature>
<feature type="modified residue" description="Phosphoserine" evidence="2">
    <location>
        <position position="456"/>
    </location>
</feature>
<feature type="modified residue" description="Phosphothreonine" evidence="2">
    <location>
        <position position="467"/>
    </location>
</feature>
<feature type="modified residue" description="Phosphoserine" evidence="2">
    <location>
        <position position="488"/>
    </location>
</feature>
<keyword id="KW-0007">Acetylation</keyword>
<keyword id="KW-0408">Iron</keyword>
<keyword id="KW-0411">Iron-sulfur</keyword>
<keyword id="KW-0479">Metal-binding</keyword>
<keyword id="KW-0597">Phosphoprotein</keyword>
<comment type="function">
    <text evidence="1 3">Required for the first step of diphthamide biosynthesis, a post-translational modification of histidine which occurs in elongation factor 2 (PubMed:21203470). DPH1 and DPH2 transfer a 3-amino-3-carboxypropyl (ACP) group from S-adenosyl-L-methionine (SAM) to a histidine residue, the reaction is assisted by a reduction system comprising DPH3 and a NADH-dependent reductase (By similarity). Facilitates the reduction of the catalytic iron-sulfur cluster found in the DPH1 subunit (By similarity).</text>
</comment>
<comment type="cofactor">
    <cofactor evidence="1">
        <name>[4Fe-4S] cluster</name>
        <dbReference type="ChEBI" id="CHEBI:49883"/>
    </cofactor>
    <text evidence="1">Binds 1 [4Fe-4S] cluster per subunit. The cluster facilitates the reduction of the catalytic iron-sulfur cluster in the DPH1 subunit.</text>
</comment>
<comment type="pathway">
    <text evidence="4">Protein modification; peptidyl-diphthamide biosynthesis.</text>
</comment>
<comment type="subunit">
    <text evidence="1 3">Component of the 2-(3-amino-3-carboxypropyl)histidine synthase complex composed of DPH1, DPH2, DPH3 and a NADH-dependent reductase (By similarity). Interacts with DPH1 (PubMed:21203470).</text>
</comment>
<comment type="similarity">
    <text evidence="4">Belongs to the DPH1/DPH2 family. DPH2 subfamily.</text>
</comment>
<proteinExistence type="evidence at protein level"/>
<reference key="1">
    <citation type="journal article" date="2010" name="PLoS ONE">
        <title>A dominant-negative approach that prevents diphthamide formation confers resistance to Pseudomonas exotoxin A and diphtheria toxin.</title>
        <authorList>
            <person name="Roy V."/>
            <person name="Ghani K."/>
            <person name="Caruso M."/>
        </authorList>
    </citation>
    <scope>NUCLEOTIDE SEQUENCE [MRNA]</scope>
    <scope>FUNCTION</scope>
    <scope>INTERACTION WITH DPH1</scope>
</reference>
<organism>
    <name type="scientific">Cricetulus griseus</name>
    <name type="common">Chinese hamster</name>
    <name type="synonym">Cricetulus barabensis griseus</name>
    <dbReference type="NCBI Taxonomy" id="10029"/>
    <lineage>
        <taxon>Eukaryota</taxon>
        <taxon>Metazoa</taxon>
        <taxon>Chordata</taxon>
        <taxon>Craniata</taxon>
        <taxon>Vertebrata</taxon>
        <taxon>Euteleostomi</taxon>
        <taxon>Mammalia</taxon>
        <taxon>Eutheria</taxon>
        <taxon>Euarchontoglires</taxon>
        <taxon>Glires</taxon>
        <taxon>Rodentia</taxon>
        <taxon>Myomorpha</taxon>
        <taxon>Muroidea</taxon>
        <taxon>Cricetidae</taxon>
        <taxon>Cricetinae</taxon>
        <taxon>Cricetulus</taxon>
    </lineage>
</organism>
<protein>
    <recommendedName>
        <fullName evidence="4">2-(3-amino-3-carboxypropyl)histidine synthase subunit 2</fullName>
    </recommendedName>
    <alternativeName>
        <fullName>Diphthamide biosynthesis protein 2</fullName>
    </alternativeName>
    <alternativeName>
        <fullName evidence="4">Diphtheria toxin resistance protein 2</fullName>
    </alternativeName>
    <alternativeName>
        <fullName evidence="4">S-adenosyl-L-methionine:L-histidine 3-amino-3-carboxypropyltransferase 2</fullName>
    </alternativeName>
</protein>